<keyword id="KW-0227">DNA damage</keyword>
<keyword id="KW-0234">DNA repair</keyword>
<keyword id="KW-0235">DNA replication</keyword>
<keyword id="KW-0255">Endonuclease</keyword>
<keyword id="KW-0269">Exonuclease</keyword>
<keyword id="KW-0378">Hydrolase</keyword>
<keyword id="KW-0460">Magnesium</keyword>
<keyword id="KW-0479">Metal-binding</keyword>
<keyword id="KW-0496">Mitochondrion</keyword>
<keyword id="KW-0540">Nuclease</keyword>
<keyword id="KW-0539">Nucleus</keyword>
<keyword id="KW-0597">Phosphoprotein</keyword>
<keyword id="KW-1185">Reference proteome</keyword>
<feature type="chain" id="PRO_0000403530" description="Flap endonuclease 1">
    <location>
        <begin position="1"/>
        <end position="379"/>
    </location>
</feature>
<feature type="region of interest" description="N-domain">
    <location>
        <begin position="1"/>
        <end position="105"/>
    </location>
</feature>
<feature type="region of interest" description="I-domain">
    <location>
        <begin position="123"/>
        <end position="254"/>
    </location>
</feature>
<feature type="region of interest" description="Disordered" evidence="2">
    <location>
        <begin position="331"/>
        <end position="379"/>
    </location>
</feature>
<feature type="region of interest" description="Interaction with PCNA" evidence="1">
    <location>
        <begin position="336"/>
        <end position="344"/>
    </location>
</feature>
<feature type="compositionally biased region" description="Basic and acidic residues" evidence="2">
    <location>
        <begin position="355"/>
        <end position="364"/>
    </location>
</feature>
<feature type="compositionally biased region" description="Basic residues" evidence="2">
    <location>
        <begin position="368"/>
        <end position="379"/>
    </location>
</feature>
<feature type="binding site" evidence="1">
    <location>
        <position position="34"/>
    </location>
    <ligand>
        <name>Mg(2+)</name>
        <dbReference type="ChEBI" id="CHEBI:18420"/>
        <label>1</label>
    </ligand>
</feature>
<feature type="binding site" evidence="1">
    <location>
        <position position="71"/>
    </location>
    <ligand>
        <name>DNA</name>
        <dbReference type="ChEBI" id="CHEBI:16991"/>
    </ligand>
</feature>
<feature type="binding site" evidence="1">
    <location>
        <position position="87"/>
    </location>
    <ligand>
        <name>Mg(2+)</name>
        <dbReference type="ChEBI" id="CHEBI:18420"/>
        <label>1</label>
    </ligand>
</feature>
<feature type="binding site" evidence="1">
    <location>
        <position position="159"/>
    </location>
    <ligand>
        <name>DNA</name>
        <dbReference type="ChEBI" id="CHEBI:16991"/>
    </ligand>
</feature>
<feature type="binding site" evidence="1">
    <location>
        <position position="159"/>
    </location>
    <ligand>
        <name>Mg(2+)</name>
        <dbReference type="ChEBI" id="CHEBI:18420"/>
        <label>1</label>
    </ligand>
</feature>
<feature type="binding site" evidence="1">
    <location>
        <position position="161"/>
    </location>
    <ligand>
        <name>Mg(2+)</name>
        <dbReference type="ChEBI" id="CHEBI:18420"/>
        <label>1</label>
    </ligand>
</feature>
<feature type="binding site" evidence="1">
    <location>
        <position position="180"/>
    </location>
    <ligand>
        <name>Mg(2+)</name>
        <dbReference type="ChEBI" id="CHEBI:18420"/>
        <label>2</label>
    </ligand>
</feature>
<feature type="binding site" evidence="1">
    <location>
        <position position="182"/>
    </location>
    <ligand>
        <name>Mg(2+)</name>
        <dbReference type="ChEBI" id="CHEBI:18420"/>
        <label>2</label>
    </ligand>
</feature>
<feature type="binding site" evidence="1">
    <location>
        <position position="232"/>
    </location>
    <ligand>
        <name>DNA</name>
        <dbReference type="ChEBI" id="CHEBI:16991"/>
    </ligand>
</feature>
<feature type="binding site" evidence="1">
    <location>
        <position position="234"/>
    </location>
    <ligand>
        <name>DNA</name>
        <dbReference type="ChEBI" id="CHEBI:16991"/>
    </ligand>
</feature>
<feature type="binding site" evidence="1">
    <location>
        <position position="234"/>
    </location>
    <ligand>
        <name>Mg(2+)</name>
        <dbReference type="ChEBI" id="CHEBI:18420"/>
        <label>2</label>
    </ligand>
</feature>
<organism>
    <name type="scientific">Zea mays</name>
    <name type="common">Maize</name>
    <dbReference type="NCBI Taxonomy" id="4577"/>
    <lineage>
        <taxon>Eukaryota</taxon>
        <taxon>Viridiplantae</taxon>
        <taxon>Streptophyta</taxon>
        <taxon>Embryophyta</taxon>
        <taxon>Tracheophyta</taxon>
        <taxon>Spermatophyta</taxon>
        <taxon>Magnoliopsida</taxon>
        <taxon>Liliopsida</taxon>
        <taxon>Poales</taxon>
        <taxon>Poaceae</taxon>
        <taxon>PACMAD clade</taxon>
        <taxon>Panicoideae</taxon>
        <taxon>Andropogonodae</taxon>
        <taxon>Andropogoneae</taxon>
        <taxon>Tripsacinae</taxon>
        <taxon>Zea</taxon>
    </lineage>
</organism>
<protein>
    <recommendedName>
        <fullName evidence="1">Flap endonuclease 1</fullName>
        <shortName evidence="1">FEN-1</shortName>
        <ecNumber evidence="1">3.1.-.-</ecNumber>
    </recommendedName>
    <alternativeName>
        <fullName evidence="1">Flap structure-specific endonuclease 1</fullName>
    </alternativeName>
</protein>
<reference key="1">
    <citation type="submission" date="2008-07" db="EMBL/GenBank/DDBJ databases">
        <title>Maize full-length cDNA project.</title>
        <authorList>
            <person name="Yu Y."/>
            <person name="Currie J."/>
            <person name="Lomeli R."/>
            <person name="Angelova A."/>
            <person name="Collura K."/>
            <person name="Wissotski M."/>
            <person name="Campos D."/>
            <person name="Kudrna D."/>
            <person name="Golser W."/>
            <person name="Ashely E."/>
            <person name="Haller K."/>
            <person name="Descour A."/>
            <person name="Fernandes J."/>
            <person name="Zuccolo A."/>
            <person name="Soderlund C."/>
            <person name="Walbot V."/>
        </authorList>
    </citation>
    <scope>NUCLEOTIDE SEQUENCE [LARGE SCALE MRNA]</scope>
    <source>
        <strain>B73</strain>
    </source>
</reference>
<gene>
    <name evidence="1" type="primary">FEN1</name>
</gene>
<dbReference type="EC" id="3.1.-.-" evidence="1"/>
<dbReference type="EMBL" id="BT036718">
    <property type="protein sequence ID" value="ACF81723.1"/>
    <property type="molecule type" value="mRNA"/>
</dbReference>
<dbReference type="RefSeq" id="NP_001306626.1">
    <property type="nucleotide sequence ID" value="NM_001319697.1"/>
</dbReference>
<dbReference type="SMR" id="B4FHY0"/>
<dbReference type="FunCoup" id="B4FHY0">
    <property type="interactions" value="3134"/>
</dbReference>
<dbReference type="STRING" id="4577.B4FHY0"/>
<dbReference type="PaxDb" id="4577-GRMZM2G121262_P01"/>
<dbReference type="EnsemblPlants" id="Zm00001eb294290_T001">
    <property type="protein sequence ID" value="Zm00001eb294290_P001"/>
    <property type="gene ID" value="Zm00001eb294290"/>
</dbReference>
<dbReference type="GeneID" id="732817"/>
<dbReference type="Gramene" id="Zm00001eb294290_T001">
    <property type="protein sequence ID" value="Zm00001eb294290_P001"/>
    <property type="gene ID" value="Zm00001eb294290"/>
</dbReference>
<dbReference type="KEGG" id="zma:732817"/>
<dbReference type="eggNOG" id="KOG2519">
    <property type="taxonomic scope" value="Eukaryota"/>
</dbReference>
<dbReference type="InParanoid" id="B4FHY0"/>
<dbReference type="OrthoDB" id="1937206at2759"/>
<dbReference type="Proteomes" id="UP000007305">
    <property type="component" value="Chromosome 6"/>
</dbReference>
<dbReference type="ExpressionAtlas" id="B4FHY0">
    <property type="expression patterns" value="baseline and differential"/>
</dbReference>
<dbReference type="GO" id="GO:0005739">
    <property type="term" value="C:mitochondrion"/>
    <property type="evidence" value="ECO:0007669"/>
    <property type="project" value="UniProtKB-SubCell"/>
</dbReference>
<dbReference type="GO" id="GO:0005730">
    <property type="term" value="C:nucleolus"/>
    <property type="evidence" value="ECO:0007669"/>
    <property type="project" value="UniProtKB-SubCell"/>
</dbReference>
<dbReference type="GO" id="GO:0005654">
    <property type="term" value="C:nucleoplasm"/>
    <property type="evidence" value="ECO:0007669"/>
    <property type="project" value="UniProtKB-SubCell"/>
</dbReference>
<dbReference type="GO" id="GO:0008409">
    <property type="term" value="F:5'-3' exonuclease activity"/>
    <property type="evidence" value="ECO:0000318"/>
    <property type="project" value="GO_Central"/>
</dbReference>
<dbReference type="GO" id="GO:0017108">
    <property type="term" value="F:5'-flap endonuclease activity"/>
    <property type="evidence" value="ECO:0000318"/>
    <property type="project" value="GO_Central"/>
</dbReference>
<dbReference type="GO" id="GO:0003677">
    <property type="term" value="F:DNA binding"/>
    <property type="evidence" value="ECO:0007669"/>
    <property type="project" value="UniProtKB-UniRule"/>
</dbReference>
<dbReference type="GO" id="GO:0000287">
    <property type="term" value="F:magnesium ion binding"/>
    <property type="evidence" value="ECO:0007669"/>
    <property type="project" value="UniProtKB-UniRule"/>
</dbReference>
<dbReference type="GO" id="GO:0006284">
    <property type="term" value="P:base-excision repair"/>
    <property type="evidence" value="ECO:0007669"/>
    <property type="project" value="UniProtKB-UniRule"/>
</dbReference>
<dbReference type="GO" id="GO:0043137">
    <property type="term" value="P:DNA replication, removal of RNA primer"/>
    <property type="evidence" value="ECO:0007669"/>
    <property type="project" value="UniProtKB-UniRule"/>
</dbReference>
<dbReference type="CDD" id="cd09907">
    <property type="entry name" value="H3TH_FEN1-Euk"/>
    <property type="match status" value="1"/>
</dbReference>
<dbReference type="CDD" id="cd09867">
    <property type="entry name" value="PIN_FEN1"/>
    <property type="match status" value="1"/>
</dbReference>
<dbReference type="FunFam" id="1.10.150.20:FF:000009">
    <property type="entry name" value="Flap endonuclease 1"/>
    <property type="match status" value="1"/>
</dbReference>
<dbReference type="FunFam" id="3.40.50.1010:FF:000015">
    <property type="entry name" value="Flap endonuclease 1"/>
    <property type="match status" value="1"/>
</dbReference>
<dbReference type="Gene3D" id="1.10.150.20">
    <property type="entry name" value="5' to 3' exonuclease, C-terminal subdomain"/>
    <property type="match status" value="1"/>
</dbReference>
<dbReference type="Gene3D" id="3.40.50.1010">
    <property type="entry name" value="5'-nuclease"/>
    <property type="match status" value="1"/>
</dbReference>
<dbReference type="HAMAP" id="MF_00614">
    <property type="entry name" value="Fen"/>
    <property type="match status" value="1"/>
</dbReference>
<dbReference type="InterPro" id="IPR002421">
    <property type="entry name" value="5-3_exonuclease"/>
</dbReference>
<dbReference type="InterPro" id="IPR036279">
    <property type="entry name" value="5-3_exonuclease_C_sf"/>
</dbReference>
<dbReference type="InterPro" id="IPR023426">
    <property type="entry name" value="Flap_endonuc"/>
</dbReference>
<dbReference type="InterPro" id="IPR008918">
    <property type="entry name" value="HhH2"/>
</dbReference>
<dbReference type="InterPro" id="IPR029060">
    <property type="entry name" value="PIN-like_dom_sf"/>
</dbReference>
<dbReference type="InterPro" id="IPR006086">
    <property type="entry name" value="XPG-I_dom"/>
</dbReference>
<dbReference type="InterPro" id="IPR006084">
    <property type="entry name" value="XPG/Rad2"/>
</dbReference>
<dbReference type="InterPro" id="IPR019974">
    <property type="entry name" value="XPG_CS"/>
</dbReference>
<dbReference type="InterPro" id="IPR006085">
    <property type="entry name" value="XPG_DNA_repair_N"/>
</dbReference>
<dbReference type="PANTHER" id="PTHR11081:SF9">
    <property type="entry name" value="FLAP ENDONUCLEASE 1"/>
    <property type="match status" value="1"/>
</dbReference>
<dbReference type="PANTHER" id="PTHR11081">
    <property type="entry name" value="FLAP ENDONUCLEASE FAMILY MEMBER"/>
    <property type="match status" value="1"/>
</dbReference>
<dbReference type="Pfam" id="PF00867">
    <property type="entry name" value="XPG_I"/>
    <property type="match status" value="1"/>
</dbReference>
<dbReference type="Pfam" id="PF00752">
    <property type="entry name" value="XPG_N"/>
    <property type="match status" value="1"/>
</dbReference>
<dbReference type="PRINTS" id="PR00853">
    <property type="entry name" value="XPGRADSUPER"/>
</dbReference>
<dbReference type="SMART" id="SM00475">
    <property type="entry name" value="53EXOc"/>
    <property type="match status" value="1"/>
</dbReference>
<dbReference type="SMART" id="SM00279">
    <property type="entry name" value="HhH2"/>
    <property type="match status" value="1"/>
</dbReference>
<dbReference type="SMART" id="SM00484">
    <property type="entry name" value="XPGI"/>
    <property type="match status" value="1"/>
</dbReference>
<dbReference type="SMART" id="SM00485">
    <property type="entry name" value="XPGN"/>
    <property type="match status" value="1"/>
</dbReference>
<dbReference type="SUPFAM" id="SSF47807">
    <property type="entry name" value="5' to 3' exonuclease, C-terminal subdomain"/>
    <property type="match status" value="1"/>
</dbReference>
<dbReference type="SUPFAM" id="SSF88723">
    <property type="entry name" value="PIN domain-like"/>
    <property type="match status" value="1"/>
</dbReference>
<dbReference type="PROSITE" id="PS00841">
    <property type="entry name" value="XPG_1"/>
    <property type="match status" value="1"/>
</dbReference>
<dbReference type="PROSITE" id="PS00842">
    <property type="entry name" value="XPG_2"/>
    <property type="match status" value="1"/>
</dbReference>
<proteinExistence type="evidence at transcript level"/>
<sequence>MGIKGLTKLLADNAPKAMKEQKFESYFGRKIAVDASMSIYQFLIVVGRTGMETLTNEAGEVTSHLQGMFNRTIRLLEAGIKPVYVFDGKPPDMKKQELAKRYSKRDDATKDLTEAVEVGDKDAIEKLSKRTVKVTRQHNEDCKRLLRLMGVPVVEAPSEAEAECAALCINDKVFAVASEDMDSLTFGAPRFLRHLMDPSSKKIPVMEFDVAKVLEELELTMDQFIDLCILCGCDYCDSIKGIGGQTALKLIRQHGSIESILENLNKDRYQIPEDWPYQEARRLFKEPNVTLDIPELKWTAPDEEGLISFLVKDNGFNEDRVTKAIEKIKSAKNKSSQGRLESFFKPTATTSAPLKRKETSDKTSKAAANKKTKAGGKKK</sequence>
<evidence type="ECO:0000255" key="1">
    <source>
        <dbReference type="HAMAP-Rule" id="MF_03140"/>
    </source>
</evidence>
<evidence type="ECO:0000256" key="2">
    <source>
        <dbReference type="SAM" id="MobiDB-lite"/>
    </source>
</evidence>
<name>FEN1_MAIZE</name>
<accession>B4FHY0</accession>
<comment type="function">
    <text evidence="1">Structure-specific nuclease with 5'-flap endonuclease and 5'-3' exonuclease activities involved in DNA replication and repair. During DNA replication, cleaves the 5'-overhanging flap structure that is generated by displacement synthesis when DNA polymerase encounters the 5'-end of a downstream Okazaki fragment. It enters the flap from the 5'-end and then tracks to cleave the flap base, leaving a nick for ligation. Also involved in the long patch base excision repair (LP-BER) pathway, by cleaving within the apurinic/apyrimidinic (AP) site-terminated flap. Acts as a genome stabilization factor that prevents flaps from equilibrating into structures that lead to duplications and deletions. Also possesses 5'-3' exonuclease activity on nicked or gapped double-stranded DNA, and exhibits RNase H activity. Also involved in replication and repair of rDNA and in repairing mitochondrial DNA.</text>
</comment>
<comment type="cofactor">
    <cofactor evidence="1">
        <name>Mg(2+)</name>
        <dbReference type="ChEBI" id="CHEBI:18420"/>
    </cofactor>
    <text evidence="1">Binds 2 magnesium ions per subunit. They probably participate in the reaction catalyzed by the enzyme. May bind an additional third magnesium ion after substrate binding.</text>
</comment>
<comment type="subunit">
    <text evidence="1">Interacts with PCNA. Three molecules of FEN1 bind to one PCNA trimer with each molecule binding to one PCNA monomer. PCNA stimulates the nuclease activity without altering cleavage specificity.</text>
</comment>
<comment type="subcellular location">
    <subcellularLocation>
        <location evidence="1">Nucleus</location>
        <location evidence="1">Nucleolus</location>
    </subcellularLocation>
    <subcellularLocation>
        <location evidence="1">Nucleus</location>
        <location evidence="1">Nucleoplasm</location>
    </subcellularLocation>
    <subcellularLocation>
        <location evidence="1">Mitochondrion</location>
    </subcellularLocation>
    <text evidence="1">Resides mostly in the nucleoli and relocalizes to the nucleoplasm upon DNA damage.</text>
</comment>
<comment type="PTM">
    <text evidence="1">Phosphorylated. Phosphorylation upon DNA damage induces relocalization to the nuclear plasma.</text>
</comment>
<comment type="similarity">
    <text evidence="1">Belongs to the XPG/RAD2 endonuclease family. FEN1 subfamily.</text>
</comment>